<sequence length="137" mass="15029">MSARTKARKRALDVLYVADIRGESIPATLAVEQQRAAAEPDRQASWQYAREIAEGFVAHQDEIDELIETYSVNWTLARMPAVDRAILRIGIWEILFNADVPHGVAISESVDLASSLSTDESASFVNGMLARIAATQA</sequence>
<reference key="1">
    <citation type="journal article" date="2008" name="J. Bacteriol.">
        <title>The genome sequence of the tomato-pathogenic actinomycete Clavibacter michiganensis subsp. michiganensis NCPPB382 reveals a large island involved in pathogenicity.</title>
        <authorList>
            <person name="Gartemann K.-H."/>
            <person name="Abt B."/>
            <person name="Bekel T."/>
            <person name="Burger A."/>
            <person name="Engemann J."/>
            <person name="Fluegel M."/>
            <person name="Gaigalat L."/>
            <person name="Goesmann A."/>
            <person name="Graefen I."/>
            <person name="Kalinowski J."/>
            <person name="Kaup O."/>
            <person name="Kirchner O."/>
            <person name="Krause L."/>
            <person name="Linke B."/>
            <person name="McHardy A."/>
            <person name="Meyer F."/>
            <person name="Pohle S."/>
            <person name="Rueckert C."/>
            <person name="Schneiker S."/>
            <person name="Zellermann E.-M."/>
            <person name="Puehler A."/>
            <person name="Eichenlaub R."/>
            <person name="Kaiser O."/>
            <person name="Bartels D."/>
        </authorList>
    </citation>
    <scope>NUCLEOTIDE SEQUENCE [LARGE SCALE GENOMIC DNA]</scope>
    <source>
        <strain>NCPPB 382</strain>
    </source>
</reference>
<keyword id="KW-0694">RNA-binding</keyword>
<keyword id="KW-0804">Transcription</keyword>
<keyword id="KW-0889">Transcription antitermination</keyword>
<keyword id="KW-0805">Transcription regulation</keyword>
<gene>
    <name evidence="1" type="primary">nusB</name>
    <name type="ordered locus">CMM_1792</name>
</gene>
<feature type="chain" id="PRO_1000023727" description="Transcription antitermination protein NusB">
    <location>
        <begin position="1"/>
        <end position="137"/>
    </location>
</feature>
<proteinExistence type="inferred from homology"/>
<protein>
    <recommendedName>
        <fullName evidence="1">Transcription antitermination protein NusB</fullName>
    </recommendedName>
    <alternativeName>
        <fullName evidence="1">Antitermination factor NusB</fullName>
    </alternativeName>
</protein>
<comment type="function">
    <text evidence="1">Involved in transcription antitermination. Required for transcription of ribosomal RNA (rRNA) genes. Binds specifically to the boxA antiterminator sequence of the ribosomal RNA (rrn) operons.</text>
</comment>
<comment type="similarity">
    <text evidence="1">Belongs to the NusB family.</text>
</comment>
<evidence type="ECO:0000255" key="1">
    <source>
        <dbReference type="HAMAP-Rule" id="MF_00073"/>
    </source>
</evidence>
<organism>
    <name type="scientific">Clavibacter michiganensis subsp. michiganensis (strain NCPPB 382)</name>
    <dbReference type="NCBI Taxonomy" id="443906"/>
    <lineage>
        <taxon>Bacteria</taxon>
        <taxon>Bacillati</taxon>
        <taxon>Actinomycetota</taxon>
        <taxon>Actinomycetes</taxon>
        <taxon>Micrococcales</taxon>
        <taxon>Microbacteriaceae</taxon>
        <taxon>Clavibacter</taxon>
    </lineage>
</organism>
<name>NUSB_CLAM3</name>
<dbReference type="EMBL" id="AM711867">
    <property type="protein sequence ID" value="CAN01848.1"/>
    <property type="molecule type" value="Genomic_DNA"/>
</dbReference>
<dbReference type="RefSeq" id="WP_012038480.1">
    <property type="nucleotide sequence ID" value="NC_009480.1"/>
</dbReference>
<dbReference type="SMR" id="A5CRY5"/>
<dbReference type="KEGG" id="cmi:CMM_1792"/>
<dbReference type="eggNOG" id="COG0781">
    <property type="taxonomic scope" value="Bacteria"/>
</dbReference>
<dbReference type="HOGENOM" id="CLU_087843_2_3_11"/>
<dbReference type="OrthoDB" id="3528057at2"/>
<dbReference type="Proteomes" id="UP000001564">
    <property type="component" value="Chromosome"/>
</dbReference>
<dbReference type="GO" id="GO:0005829">
    <property type="term" value="C:cytosol"/>
    <property type="evidence" value="ECO:0007669"/>
    <property type="project" value="TreeGrafter"/>
</dbReference>
<dbReference type="GO" id="GO:0003723">
    <property type="term" value="F:RNA binding"/>
    <property type="evidence" value="ECO:0007669"/>
    <property type="project" value="UniProtKB-UniRule"/>
</dbReference>
<dbReference type="GO" id="GO:0006353">
    <property type="term" value="P:DNA-templated transcription termination"/>
    <property type="evidence" value="ECO:0007669"/>
    <property type="project" value="UniProtKB-UniRule"/>
</dbReference>
<dbReference type="GO" id="GO:0031564">
    <property type="term" value="P:transcription antitermination"/>
    <property type="evidence" value="ECO:0007669"/>
    <property type="project" value="UniProtKB-KW"/>
</dbReference>
<dbReference type="Gene3D" id="1.10.940.10">
    <property type="entry name" value="NusB-like"/>
    <property type="match status" value="1"/>
</dbReference>
<dbReference type="HAMAP" id="MF_00073">
    <property type="entry name" value="NusB"/>
    <property type="match status" value="1"/>
</dbReference>
<dbReference type="InterPro" id="IPR035926">
    <property type="entry name" value="NusB-like_sf"/>
</dbReference>
<dbReference type="InterPro" id="IPR011605">
    <property type="entry name" value="NusB_fam"/>
</dbReference>
<dbReference type="InterPro" id="IPR006027">
    <property type="entry name" value="NusB_RsmB_TIM44"/>
</dbReference>
<dbReference type="NCBIfam" id="TIGR01951">
    <property type="entry name" value="nusB"/>
    <property type="match status" value="1"/>
</dbReference>
<dbReference type="PANTHER" id="PTHR11078:SF3">
    <property type="entry name" value="ANTITERMINATION NUSB DOMAIN-CONTAINING PROTEIN"/>
    <property type="match status" value="1"/>
</dbReference>
<dbReference type="PANTHER" id="PTHR11078">
    <property type="entry name" value="N UTILIZATION SUBSTANCE PROTEIN B-RELATED"/>
    <property type="match status" value="1"/>
</dbReference>
<dbReference type="Pfam" id="PF01029">
    <property type="entry name" value="NusB"/>
    <property type="match status" value="1"/>
</dbReference>
<dbReference type="SUPFAM" id="SSF48013">
    <property type="entry name" value="NusB-like"/>
    <property type="match status" value="1"/>
</dbReference>
<accession>A5CRY5</accession>